<proteinExistence type="inferred from homology"/>
<protein>
    <recommendedName>
        <fullName evidence="2">NADH-quinone oxidoreductase subunit C/D</fullName>
        <ecNumber evidence="2">7.1.1.-</ecNumber>
    </recommendedName>
    <alternativeName>
        <fullName evidence="2">NADH dehydrogenase I subunit C/D</fullName>
    </alternativeName>
    <alternativeName>
        <fullName evidence="2">NDH-1 subunit C/D</fullName>
    </alternativeName>
</protein>
<accession>P0A1Y7</accession>
<accession>P33902</accession>
<comment type="function">
    <text evidence="2">NDH-1 shuttles electrons from NADH, via FMN and iron-sulfur (Fe-S) centers, to quinones in the respiratory chain. The immediate electron acceptor for the enzyme in this species is believed to be ubiquinone. Couples the redox reaction to proton translocation (for every two electrons transferred, four hydrogen ions are translocated across the cytoplasmic membrane), and thus conserves the redox energy in a proton gradient.</text>
</comment>
<comment type="catalytic activity">
    <reaction evidence="2">
        <text>a quinone + NADH + 5 H(+)(in) = a quinol + NAD(+) + 4 H(+)(out)</text>
        <dbReference type="Rhea" id="RHEA:57888"/>
        <dbReference type="ChEBI" id="CHEBI:15378"/>
        <dbReference type="ChEBI" id="CHEBI:24646"/>
        <dbReference type="ChEBI" id="CHEBI:57540"/>
        <dbReference type="ChEBI" id="CHEBI:57945"/>
        <dbReference type="ChEBI" id="CHEBI:132124"/>
    </reaction>
</comment>
<comment type="subunit">
    <text evidence="2">NDH-1 is composed of 13 different subunits. Subunits NuoB, CD, E, F, and G constitute the peripheral sector of the complex.</text>
</comment>
<comment type="subcellular location">
    <subcellularLocation>
        <location evidence="2">Cell inner membrane</location>
        <topology evidence="2">Peripheral membrane protein</topology>
        <orientation evidence="2">Cytoplasmic side</orientation>
    </subcellularLocation>
</comment>
<comment type="similarity">
    <text evidence="2">In the N-terminal section; belongs to the complex I 30 kDa subunit family.</text>
</comment>
<comment type="similarity">
    <text evidence="2">In the C-terminal section; belongs to the complex I 49 kDa subunit family.</text>
</comment>
<name>NUOCD_SALTI</name>
<dbReference type="EC" id="7.1.1.-" evidence="2"/>
<dbReference type="EMBL" id="AL513382">
    <property type="protein sequence ID" value="CAD07558.1"/>
    <property type="molecule type" value="Genomic_DNA"/>
</dbReference>
<dbReference type="EMBL" id="AE014613">
    <property type="protein sequence ID" value="AAO68244.1"/>
    <property type="molecule type" value="Genomic_DNA"/>
</dbReference>
<dbReference type="RefSeq" id="NP_456868.1">
    <property type="nucleotide sequence ID" value="NC_003198.1"/>
</dbReference>
<dbReference type="SMR" id="P0A1Y7"/>
<dbReference type="STRING" id="220341.gene:17586455"/>
<dbReference type="KEGG" id="stt:t0538"/>
<dbReference type="KEGG" id="sty:STY2556"/>
<dbReference type="PATRIC" id="fig|220341.7.peg.2586"/>
<dbReference type="eggNOG" id="COG0649">
    <property type="taxonomic scope" value="Bacteria"/>
</dbReference>
<dbReference type="eggNOG" id="COG0852">
    <property type="taxonomic scope" value="Bacteria"/>
</dbReference>
<dbReference type="HOGENOM" id="CLU_015134_3_2_6"/>
<dbReference type="OMA" id="TRMDYLT"/>
<dbReference type="Proteomes" id="UP000000541">
    <property type="component" value="Chromosome"/>
</dbReference>
<dbReference type="Proteomes" id="UP000002670">
    <property type="component" value="Chromosome"/>
</dbReference>
<dbReference type="GO" id="GO:0030964">
    <property type="term" value="C:NADH dehydrogenase complex"/>
    <property type="evidence" value="ECO:0007669"/>
    <property type="project" value="InterPro"/>
</dbReference>
<dbReference type="GO" id="GO:0005886">
    <property type="term" value="C:plasma membrane"/>
    <property type="evidence" value="ECO:0007669"/>
    <property type="project" value="UniProtKB-SubCell"/>
</dbReference>
<dbReference type="GO" id="GO:0051287">
    <property type="term" value="F:NAD binding"/>
    <property type="evidence" value="ECO:0007669"/>
    <property type="project" value="InterPro"/>
</dbReference>
<dbReference type="GO" id="GO:0008137">
    <property type="term" value="F:NADH dehydrogenase (ubiquinone) activity"/>
    <property type="evidence" value="ECO:0007669"/>
    <property type="project" value="InterPro"/>
</dbReference>
<dbReference type="GO" id="GO:0050136">
    <property type="term" value="F:NADH:ubiquinone reductase (non-electrogenic) activity"/>
    <property type="evidence" value="ECO:0007669"/>
    <property type="project" value="UniProtKB-UniRule"/>
</dbReference>
<dbReference type="GO" id="GO:0048038">
    <property type="term" value="F:quinone binding"/>
    <property type="evidence" value="ECO:0007669"/>
    <property type="project" value="UniProtKB-KW"/>
</dbReference>
<dbReference type="FunFam" id="1.10.645.10:FF:000001">
    <property type="entry name" value="NADH-quinone oxidoreductase subunit C/D"/>
    <property type="match status" value="1"/>
</dbReference>
<dbReference type="FunFam" id="3.30.460.80:FF:000001">
    <property type="entry name" value="NADH-quinone oxidoreductase subunit C/D"/>
    <property type="match status" value="1"/>
</dbReference>
<dbReference type="Gene3D" id="1.10.645.10">
    <property type="entry name" value="Cytochrome-c3 Hydrogenase, chain B"/>
    <property type="match status" value="1"/>
</dbReference>
<dbReference type="Gene3D" id="3.30.460.80">
    <property type="entry name" value="NADH:ubiquinone oxidoreductase, 30kDa subunit"/>
    <property type="match status" value="1"/>
</dbReference>
<dbReference type="HAMAP" id="MF_01359">
    <property type="entry name" value="NDH1_NuoCD_1"/>
    <property type="match status" value="1"/>
</dbReference>
<dbReference type="HAMAP" id="MF_01358">
    <property type="entry name" value="NDH1_NuoD"/>
    <property type="match status" value="1"/>
</dbReference>
<dbReference type="InterPro" id="IPR010218">
    <property type="entry name" value="NADH_DH_suC"/>
</dbReference>
<dbReference type="InterPro" id="IPR023062">
    <property type="entry name" value="NADH_DH_suCD"/>
</dbReference>
<dbReference type="InterPro" id="IPR001135">
    <property type="entry name" value="NADH_Q_OxRdtase_suD"/>
</dbReference>
<dbReference type="InterPro" id="IPR037232">
    <property type="entry name" value="NADH_quin_OxRdtase_su_C/D-like"/>
</dbReference>
<dbReference type="InterPro" id="IPR001268">
    <property type="entry name" value="NADH_UbQ_OxRdtase_30kDa_su"/>
</dbReference>
<dbReference type="InterPro" id="IPR014029">
    <property type="entry name" value="NADH_UbQ_OxRdtase_49kDa_CS"/>
</dbReference>
<dbReference type="InterPro" id="IPR022885">
    <property type="entry name" value="NDH1_su_D/H"/>
</dbReference>
<dbReference type="InterPro" id="IPR029014">
    <property type="entry name" value="NiFe-Hase_large"/>
</dbReference>
<dbReference type="NCBIfam" id="TIGR01961">
    <property type="entry name" value="NuoC_fam"/>
    <property type="match status" value="1"/>
</dbReference>
<dbReference type="NCBIfam" id="TIGR01962">
    <property type="entry name" value="NuoD"/>
    <property type="match status" value="1"/>
</dbReference>
<dbReference type="NCBIfam" id="NF004739">
    <property type="entry name" value="PRK06075.1"/>
    <property type="match status" value="1"/>
</dbReference>
<dbReference type="NCBIfam" id="NF008728">
    <property type="entry name" value="PRK11742.1"/>
    <property type="match status" value="1"/>
</dbReference>
<dbReference type="PANTHER" id="PTHR11993:SF45">
    <property type="entry name" value="NADH-QUINONE OXIDOREDUCTASE SUBUNIT C_D"/>
    <property type="match status" value="1"/>
</dbReference>
<dbReference type="PANTHER" id="PTHR11993">
    <property type="entry name" value="NADH-UBIQUINONE OXIDOREDUCTASE 49 KDA SUBUNIT"/>
    <property type="match status" value="1"/>
</dbReference>
<dbReference type="Pfam" id="PF00329">
    <property type="entry name" value="Complex1_30kDa"/>
    <property type="match status" value="1"/>
</dbReference>
<dbReference type="Pfam" id="PF00346">
    <property type="entry name" value="Complex1_49kDa"/>
    <property type="match status" value="1"/>
</dbReference>
<dbReference type="SUPFAM" id="SSF56762">
    <property type="entry name" value="HydB/Nqo4-like"/>
    <property type="match status" value="1"/>
</dbReference>
<dbReference type="SUPFAM" id="SSF143243">
    <property type="entry name" value="Nqo5-like"/>
    <property type="match status" value="1"/>
</dbReference>
<dbReference type="PROSITE" id="PS00535">
    <property type="entry name" value="COMPLEX1_49K"/>
    <property type="match status" value="1"/>
</dbReference>
<feature type="initiator methionine" description="Removed" evidence="1">
    <location>
        <position position="1"/>
    </location>
</feature>
<feature type="chain" id="PRO_0000118679" description="NADH-quinone oxidoreductase subunit C/D">
    <location>
        <begin position="2"/>
        <end position="596"/>
    </location>
</feature>
<feature type="region of interest" description="NADH dehydrogenase I subunit C" evidence="2">
    <location>
        <begin position="2"/>
        <end position="186"/>
    </location>
</feature>
<feature type="region of interest" description="NADH dehydrogenase I subunit D" evidence="2">
    <location>
        <begin position="210"/>
        <end position="596"/>
    </location>
</feature>
<organism>
    <name type="scientific">Salmonella typhi</name>
    <dbReference type="NCBI Taxonomy" id="90370"/>
    <lineage>
        <taxon>Bacteria</taxon>
        <taxon>Pseudomonadati</taxon>
        <taxon>Pseudomonadota</taxon>
        <taxon>Gammaproteobacteria</taxon>
        <taxon>Enterobacterales</taxon>
        <taxon>Enterobacteriaceae</taxon>
        <taxon>Salmonella</taxon>
    </lineage>
</organism>
<evidence type="ECO:0000250" key="1"/>
<evidence type="ECO:0000255" key="2">
    <source>
        <dbReference type="HAMAP-Rule" id="MF_01359"/>
    </source>
</evidence>
<gene>
    <name evidence="2" type="primary">nuoC</name>
    <name evidence="2" type="synonym">nuoCD</name>
    <name evidence="2" type="synonym">nuoD</name>
    <name type="ordered locus">STY2556</name>
    <name type="ordered locus">t0538</name>
</gene>
<keyword id="KW-0997">Cell inner membrane</keyword>
<keyword id="KW-1003">Cell membrane</keyword>
<keyword id="KW-0472">Membrane</keyword>
<keyword id="KW-0511">Multifunctional enzyme</keyword>
<keyword id="KW-0520">NAD</keyword>
<keyword id="KW-0874">Quinone</keyword>
<keyword id="KW-1278">Translocase</keyword>
<keyword id="KW-0813">Transport</keyword>
<keyword id="KW-0830">Ubiquinone</keyword>
<reference key="1">
    <citation type="journal article" date="2001" name="Nature">
        <title>Complete genome sequence of a multiple drug resistant Salmonella enterica serovar Typhi CT18.</title>
        <authorList>
            <person name="Parkhill J."/>
            <person name="Dougan G."/>
            <person name="James K.D."/>
            <person name="Thomson N.R."/>
            <person name="Pickard D."/>
            <person name="Wain J."/>
            <person name="Churcher C.M."/>
            <person name="Mungall K.L."/>
            <person name="Bentley S.D."/>
            <person name="Holden M.T.G."/>
            <person name="Sebaihia M."/>
            <person name="Baker S."/>
            <person name="Basham D."/>
            <person name="Brooks K."/>
            <person name="Chillingworth T."/>
            <person name="Connerton P."/>
            <person name="Cronin A."/>
            <person name="Davis P."/>
            <person name="Davies R.M."/>
            <person name="Dowd L."/>
            <person name="White N."/>
            <person name="Farrar J."/>
            <person name="Feltwell T."/>
            <person name="Hamlin N."/>
            <person name="Haque A."/>
            <person name="Hien T.T."/>
            <person name="Holroyd S."/>
            <person name="Jagels K."/>
            <person name="Krogh A."/>
            <person name="Larsen T.S."/>
            <person name="Leather S."/>
            <person name="Moule S."/>
            <person name="O'Gaora P."/>
            <person name="Parry C."/>
            <person name="Quail M.A."/>
            <person name="Rutherford K.M."/>
            <person name="Simmonds M."/>
            <person name="Skelton J."/>
            <person name="Stevens K."/>
            <person name="Whitehead S."/>
            <person name="Barrell B.G."/>
        </authorList>
    </citation>
    <scope>NUCLEOTIDE SEQUENCE [LARGE SCALE GENOMIC DNA]</scope>
    <source>
        <strain>CT18</strain>
    </source>
</reference>
<reference key="2">
    <citation type="journal article" date="2003" name="J. Bacteriol.">
        <title>Comparative genomics of Salmonella enterica serovar Typhi strains Ty2 and CT18.</title>
        <authorList>
            <person name="Deng W."/>
            <person name="Liou S.-R."/>
            <person name="Plunkett G. III"/>
            <person name="Mayhew G.F."/>
            <person name="Rose D.J."/>
            <person name="Burland V."/>
            <person name="Kodoyianni V."/>
            <person name="Schwartz D.C."/>
            <person name="Blattner F.R."/>
        </authorList>
    </citation>
    <scope>NUCLEOTIDE SEQUENCE [LARGE SCALE GENOMIC DNA]</scope>
    <source>
        <strain>ATCC 700931 / Ty2</strain>
    </source>
</reference>
<sequence>MTDLTAQDAAWSTRDHLDDPVIGELRNRFGPDAFTVQATRTGIPVVWVKREQLLEVGDFLKKLPKPYVMLFDLHGMDERLRTHRDGLPAADFSVFYHLISIERNRDIMLKVALSENDLRVPTFTKLFPNANWYERETWEMFGIDIEGHPHLTRIMMPQTWEGHPLRKDYPARATEFDPFELTKAKQDLEMEALTFKPEDWGMKRGTDNEDFMFLNLGPNHPSAHGAFRIILQLDGEEIVDCVPDIGYHHRGAEKMGERQSWHSYIPYTDRIEYLGGCVNEMPYVLAVEKLAGITVPDRVNVIRVMLSELFRINSHLLYISTFIQDVGAMTPVFFAFTDRQKIYDLVEAITGFRMHPAWFRIGGVAHDLPRGWDRLLREFLEWMPKRLDSYEKAALRNTILKGRSQGVAAYGAKEALEWGTTGAGLRATGIDFDVRKWRPYSGYENFDFEVPVGGGVSDCYTRVMLKVEELRQSLRILQQCLDNMPEGPFKADHPLTTPPPKERTLQHIETLITHFLQVSWGPVMPAQESFQMVEATKGINSYYLTSDGSTMSYRTRVRTPSFAHLQQIPSAIRGSLVSDLIVYLGSIDFVMSDVDR</sequence>